<sequence>MAEQLTLDSIEPEPEKQSAKIEKRSIKERRQQVLTVLTHLLHSEKGMERMTTARLAKEVGVSEAALYRYFPSKTKMFEALIENIESSLFSRISYSIKMETNTLNRVHDILQMIFDFARKNPGLTRVLTGHALMFEEAKLQARVALFFDRLELQFVNILQMRKLREGKTFPIDERTIATYLVTFCEGQFMRLVRTNFRHMPNQGFEQQWRFIEPLFE</sequence>
<reference key="1">
    <citation type="journal article" date="2004" name="Nat. Biotechnol.">
        <title>The genome sequence of the capnophilic rumen bacterium Mannheimia succiniciproducens.</title>
        <authorList>
            <person name="Hong S.H."/>
            <person name="Kim J.S."/>
            <person name="Lee S.Y."/>
            <person name="In Y.H."/>
            <person name="Choi S.S."/>
            <person name="Rih J.-K."/>
            <person name="Kim C.H."/>
            <person name="Jeong H."/>
            <person name="Hur C.G."/>
            <person name="Kim J.J."/>
        </authorList>
    </citation>
    <scope>NUCLEOTIDE SEQUENCE [LARGE SCALE GENOMIC DNA]</scope>
    <source>
        <strain>KCTC 0769BP / MBEL55E</strain>
    </source>
</reference>
<keyword id="KW-0131">Cell cycle</keyword>
<keyword id="KW-0132">Cell division</keyword>
<keyword id="KW-0963">Cytoplasm</keyword>
<keyword id="KW-0238">DNA-binding</keyword>
<protein>
    <recommendedName>
        <fullName evidence="1">Nucleoid occlusion factor SlmA</fullName>
    </recommendedName>
</protein>
<organism>
    <name type="scientific">Mannheimia succiniciproducens (strain KCTC 0769BP / MBEL55E)</name>
    <dbReference type="NCBI Taxonomy" id="221988"/>
    <lineage>
        <taxon>Bacteria</taxon>
        <taxon>Pseudomonadati</taxon>
        <taxon>Pseudomonadota</taxon>
        <taxon>Gammaproteobacteria</taxon>
        <taxon>Pasteurellales</taxon>
        <taxon>Pasteurellaceae</taxon>
        <taxon>Basfia</taxon>
    </lineage>
</organism>
<name>SLMA_MANSM</name>
<gene>
    <name evidence="1" type="primary">slmA</name>
    <name type="ordered locus">MS1936</name>
</gene>
<comment type="function">
    <text evidence="1">Required for nucleoid occlusion (NO) phenomenon, which prevents Z-ring formation and cell division over the nucleoid. Acts as a DNA-associated cell division inhibitor that binds simultaneously chromosomal DNA and FtsZ, and disrupts the assembly of FtsZ polymers. SlmA-DNA-binding sequences (SBS) are dispersed on non-Ter regions of the chromosome, preventing FtsZ polymerization at these regions.</text>
</comment>
<comment type="subunit">
    <text evidence="1">Homodimer. Interacts with FtsZ.</text>
</comment>
<comment type="subcellular location">
    <subcellularLocation>
        <location evidence="1">Cytoplasm</location>
        <location evidence="1">Nucleoid</location>
    </subcellularLocation>
</comment>
<comment type="similarity">
    <text evidence="1">Belongs to the nucleoid occlusion factor SlmA family.</text>
</comment>
<proteinExistence type="inferred from homology"/>
<feature type="chain" id="PRO_0000198973" description="Nucleoid occlusion factor SlmA">
    <location>
        <begin position="1"/>
        <end position="216"/>
    </location>
</feature>
<feature type="domain" description="HTH tetR-type" evidence="1">
    <location>
        <begin position="28"/>
        <end position="88"/>
    </location>
</feature>
<feature type="DNA-binding region" description="H-T-H motif" evidence="1">
    <location>
        <begin position="51"/>
        <end position="70"/>
    </location>
</feature>
<feature type="region of interest" description="Disordered" evidence="2">
    <location>
        <begin position="1"/>
        <end position="23"/>
    </location>
</feature>
<feature type="compositionally biased region" description="Basic and acidic residues" evidence="2">
    <location>
        <begin position="13"/>
        <end position="23"/>
    </location>
</feature>
<dbReference type="EMBL" id="AE016827">
    <property type="protein sequence ID" value="AAU38543.1"/>
    <property type="molecule type" value="Genomic_DNA"/>
</dbReference>
<dbReference type="SMR" id="Q65R67"/>
<dbReference type="STRING" id="221988.MS1936"/>
<dbReference type="KEGG" id="msu:MS1936"/>
<dbReference type="eggNOG" id="COG1309">
    <property type="taxonomic scope" value="Bacteria"/>
</dbReference>
<dbReference type="HOGENOM" id="CLU_069356_5_0_6"/>
<dbReference type="Proteomes" id="UP000000607">
    <property type="component" value="Chromosome"/>
</dbReference>
<dbReference type="GO" id="GO:0043590">
    <property type="term" value="C:bacterial nucleoid"/>
    <property type="evidence" value="ECO:0007669"/>
    <property type="project" value="UniProtKB-UniRule"/>
</dbReference>
<dbReference type="GO" id="GO:0005737">
    <property type="term" value="C:cytoplasm"/>
    <property type="evidence" value="ECO:0007669"/>
    <property type="project" value="UniProtKB-UniRule"/>
</dbReference>
<dbReference type="GO" id="GO:0043565">
    <property type="term" value="F:sequence-specific DNA binding"/>
    <property type="evidence" value="ECO:0007669"/>
    <property type="project" value="UniProtKB-UniRule"/>
</dbReference>
<dbReference type="GO" id="GO:0051301">
    <property type="term" value="P:cell division"/>
    <property type="evidence" value="ECO:0007669"/>
    <property type="project" value="UniProtKB-KW"/>
</dbReference>
<dbReference type="GO" id="GO:0010974">
    <property type="term" value="P:negative regulation of division septum assembly"/>
    <property type="evidence" value="ECO:0007669"/>
    <property type="project" value="InterPro"/>
</dbReference>
<dbReference type="Gene3D" id="1.10.357.10">
    <property type="entry name" value="Tetracycline Repressor, domain 2"/>
    <property type="match status" value="1"/>
</dbReference>
<dbReference type="HAMAP" id="MF_01839">
    <property type="entry name" value="NO_factor_SlmA"/>
    <property type="match status" value="1"/>
</dbReference>
<dbReference type="InterPro" id="IPR023772">
    <property type="entry name" value="DNA-bd_HTH_TetR-type_CS"/>
</dbReference>
<dbReference type="InterPro" id="IPR009057">
    <property type="entry name" value="Homeodomain-like_sf"/>
</dbReference>
<dbReference type="InterPro" id="IPR050624">
    <property type="entry name" value="HTH-type_Tx_Regulator"/>
</dbReference>
<dbReference type="InterPro" id="IPR001647">
    <property type="entry name" value="HTH_TetR"/>
</dbReference>
<dbReference type="InterPro" id="IPR023769">
    <property type="entry name" value="NO_SlmA"/>
</dbReference>
<dbReference type="InterPro" id="IPR054580">
    <property type="entry name" value="SlmA-like_C"/>
</dbReference>
<dbReference type="NCBIfam" id="NF007015">
    <property type="entry name" value="PRK09480.1"/>
    <property type="match status" value="1"/>
</dbReference>
<dbReference type="PANTHER" id="PTHR43479">
    <property type="entry name" value="ACREF/ENVCD OPERON REPRESSOR-RELATED"/>
    <property type="match status" value="1"/>
</dbReference>
<dbReference type="PANTHER" id="PTHR43479:SF11">
    <property type="entry name" value="ACREF_ENVCD OPERON REPRESSOR-RELATED"/>
    <property type="match status" value="1"/>
</dbReference>
<dbReference type="Pfam" id="PF22276">
    <property type="entry name" value="SlmA-like_C"/>
    <property type="match status" value="1"/>
</dbReference>
<dbReference type="Pfam" id="PF00440">
    <property type="entry name" value="TetR_N"/>
    <property type="match status" value="1"/>
</dbReference>
<dbReference type="SUPFAM" id="SSF46689">
    <property type="entry name" value="Homeodomain-like"/>
    <property type="match status" value="1"/>
</dbReference>
<dbReference type="PROSITE" id="PS01081">
    <property type="entry name" value="HTH_TETR_1"/>
    <property type="match status" value="1"/>
</dbReference>
<dbReference type="PROSITE" id="PS50977">
    <property type="entry name" value="HTH_TETR_2"/>
    <property type="match status" value="1"/>
</dbReference>
<accession>Q65R67</accession>
<evidence type="ECO:0000255" key="1">
    <source>
        <dbReference type="HAMAP-Rule" id="MF_01839"/>
    </source>
</evidence>
<evidence type="ECO:0000256" key="2">
    <source>
        <dbReference type="SAM" id="MobiDB-lite"/>
    </source>
</evidence>